<sequence length="69" mass="7667">MKAIISLLLISAMVFSMIEAVPVXXGLQLFESERGCLPHNRFCNALSGPRCCSRLKCKELSIWDSRCLG</sequence>
<name>TAG2I_AGEOR</name>
<feature type="signal peptide" evidence="2">
    <location>
        <begin position="1"/>
        <end position="20"/>
    </location>
</feature>
<feature type="propeptide" id="PRO_5000093619" evidence="2">
    <location>
        <begin position="21"/>
        <end position="34"/>
    </location>
</feature>
<feature type="chain" id="PRO_5000093620" description="U2-agatoxin-Ao1i">
    <location>
        <begin position="35"/>
        <end position="68"/>
    </location>
</feature>
<feature type="modified residue" description="Leucine amide" evidence="1">
    <location>
        <position position="68"/>
    </location>
</feature>
<feature type="disulfide bond" evidence="1">
    <location>
        <begin position="36"/>
        <end position="52"/>
    </location>
</feature>
<feature type="disulfide bond" evidence="1">
    <location>
        <begin position="43"/>
        <end position="57"/>
    </location>
</feature>
<feature type="disulfide bond" evidence="1">
    <location>
        <begin position="51"/>
        <end position="67"/>
    </location>
</feature>
<keyword id="KW-0027">Amidation</keyword>
<keyword id="KW-1015">Disulfide bond</keyword>
<keyword id="KW-0960">Knottin</keyword>
<keyword id="KW-0528">Neurotoxin</keyword>
<keyword id="KW-0964">Secreted</keyword>
<keyword id="KW-0732">Signal</keyword>
<keyword id="KW-0800">Toxin</keyword>
<evidence type="ECO:0000250" key="1"/>
<evidence type="ECO:0000255" key="2"/>
<evidence type="ECO:0000305" key="3"/>
<organism>
    <name type="scientific">Agelena orientalis</name>
    <name type="common">Funnel-web spider</name>
    <dbReference type="NCBI Taxonomy" id="293813"/>
    <lineage>
        <taxon>Eukaryota</taxon>
        <taxon>Metazoa</taxon>
        <taxon>Ecdysozoa</taxon>
        <taxon>Arthropoda</taxon>
        <taxon>Chelicerata</taxon>
        <taxon>Arachnida</taxon>
        <taxon>Araneae</taxon>
        <taxon>Araneomorphae</taxon>
        <taxon>Entelegynae</taxon>
        <taxon>Agelenidae</taxon>
        <taxon>Agelena</taxon>
    </lineage>
</organism>
<accession>Q5Y4X7</accession>
<protein>
    <recommendedName>
        <fullName>U2-agatoxin-Ao1i</fullName>
        <shortName>U2-AGTX-Ao1i</shortName>
    </recommendedName>
    <alternativeName>
        <fullName>Agel_08</fullName>
    </alternativeName>
</protein>
<comment type="function">
    <text evidence="1">Insect active toxin causing rapid but reversible paralysis in crickets. No activity shown in mammals. Does not show effect on mammalian voltage-gated calcium channels (By similarity).</text>
</comment>
<comment type="subcellular location">
    <subcellularLocation>
        <location evidence="1">Secreted</location>
    </subcellularLocation>
</comment>
<comment type="tissue specificity">
    <text>Expressed by the venom gland.</text>
</comment>
<comment type="domain">
    <text evidence="1">The presence of a 'disulfide through disulfide knot' structurally defines this protein as a knottin.</text>
</comment>
<comment type="similarity">
    <text evidence="3">Belongs to the neurotoxin 01 (U2-agtx) family.</text>
</comment>
<reference key="1">
    <citation type="journal article" date="2005" name="Proteins">
        <title>A novel strategy for the identification of toxinlike structures in spider venom.</title>
        <authorList>
            <person name="Kozlov S.A."/>
            <person name="Malyavka A."/>
            <person name="McCutchen B."/>
            <person name="Lu A."/>
            <person name="Schepers E."/>
            <person name="Herrmann R."/>
            <person name="Grishin E.V."/>
        </authorList>
    </citation>
    <scope>NUCLEOTIDE SEQUENCE [MRNA]</scope>
    <source>
        <tissue>Venom gland</tissue>
    </source>
</reference>
<proteinExistence type="evidence at transcript level"/>
<dbReference type="EMBL" id="AY681305">
    <property type="protein sequence ID" value="AAU93663.1"/>
    <property type="molecule type" value="mRNA"/>
</dbReference>
<dbReference type="ArachnoServer" id="AS000105">
    <property type="toxin name" value="U2-agatoxin-Ao1i"/>
</dbReference>
<dbReference type="GO" id="GO:0005576">
    <property type="term" value="C:extracellular region"/>
    <property type="evidence" value="ECO:0007669"/>
    <property type="project" value="UniProtKB-SubCell"/>
</dbReference>
<dbReference type="GO" id="GO:0090729">
    <property type="term" value="F:toxin activity"/>
    <property type="evidence" value="ECO:0007669"/>
    <property type="project" value="UniProtKB-KW"/>
</dbReference>
<dbReference type="Pfam" id="PF05980">
    <property type="entry name" value="Toxin_7"/>
    <property type="match status" value="1"/>
</dbReference>
<dbReference type="SUPFAM" id="SSF57059">
    <property type="entry name" value="omega toxin-like"/>
    <property type="match status" value="1"/>
</dbReference>